<accession>A5E5G3</accession>
<reference key="1">
    <citation type="journal article" date="2009" name="Nature">
        <title>Evolution of pathogenicity and sexual reproduction in eight Candida genomes.</title>
        <authorList>
            <person name="Butler G."/>
            <person name="Rasmussen M.D."/>
            <person name="Lin M.F."/>
            <person name="Santos M.A.S."/>
            <person name="Sakthikumar S."/>
            <person name="Munro C.A."/>
            <person name="Rheinbay E."/>
            <person name="Grabherr M."/>
            <person name="Forche A."/>
            <person name="Reedy J.L."/>
            <person name="Agrafioti I."/>
            <person name="Arnaud M.B."/>
            <person name="Bates S."/>
            <person name="Brown A.J.P."/>
            <person name="Brunke S."/>
            <person name="Costanzo M.C."/>
            <person name="Fitzpatrick D.A."/>
            <person name="de Groot P.W.J."/>
            <person name="Harris D."/>
            <person name="Hoyer L.L."/>
            <person name="Hube B."/>
            <person name="Klis F.M."/>
            <person name="Kodira C."/>
            <person name="Lennard N."/>
            <person name="Logue M.E."/>
            <person name="Martin R."/>
            <person name="Neiman A.M."/>
            <person name="Nikolaou E."/>
            <person name="Quail M.A."/>
            <person name="Quinn J."/>
            <person name="Santos M.C."/>
            <person name="Schmitzberger F.F."/>
            <person name="Sherlock G."/>
            <person name="Shah P."/>
            <person name="Silverstein K.A.T."/>
            <person name="Skrzypek M.S."/>
            <person name="Soll D."/>
            <person name="Staggs R."/>
            <person name="Stansfield I."/>
            <person name="Stumpf M.P.H."/>
            <person name="Sudbery P.E."/>
            <person name="Srikantha T."/>
            <person name="Zeng Q."/>
            <person name="Berman J."/>
            <person name="Berriman M."/>
            <person name="Heitman J."/>
            <person name="Gow N.A.R."/>
            <person name="Lorenz M.C."/>
            <person name="Birren B.W."/>
            <person name="Kellis M."/>
            <person name="Cuomo C.A."/>
        </authorList>
    </citation>
    <scope>NUCLEOTIDE SEQUENCE [LARGE SCALE GENOMIC DNA]</scope>
    <source>
        <strain>ATCC 11503 / BCRC 21390 / CBS 2605 / JCM 1781 / NBRC 1676 / NRRL YB-4239</strain>
    </source>
</reference>
<organism>
    <name type="scientific">Lodderomyces elongisporus (strain ATCC 11503 / CBS 2605 / JCM 1781 / NBRC 1676 / NRRL YB-4239)</name>
    <name type="common">Yeast</name>
    <name type="synonym">Saccharomyces elongisporus</name>
    <dbReference type="NCBI Taxonomy" id="379508"/>
    <lineage>
        <taxon>Eukaryota</taxon>
        <taxon>Fungi</taxon>
        <taxon>Dikarya</taxon>
        <taxon>Ascomycota</taxon>
        <taxon>Saccharomycotina</taxon>
        <taxon>Pichiomycetes</taxon>
        <taxon>Debaryomycetaceae</taxon>
        <taxon>Candida/Lodderomyces clade</taxon>
        <taxon>Lodderomyces</taxon>
    </lineage>
</organism>
<sequence length="190" mass="21437">MWIFDWFQDILASLGLWNKHAKLLFLGLDNAGKTTLLHMLKNDRLATLQPTLHPTSEELAIGSVRFTTFDLGGHQQARRLWKDYFPEVNGIVFLVDAADSERFAESKAELESLFKIEELSQVPFVILGNKIDVPTAVGEMELKNALGLYNTTGKDTGKLPEGQRPIEVFMVSVVMRSGYGDAFKWLSQYI</sequence>
<dbReference type="EC" id="3.6.5.-"/>
<dbReference type="EMBL" id="CH981530">
    <property type="protein sequence ID" value="EDK46671.1"/>
    <property type="status" value="ALT_SEQ"/>
    <property type="molecule type" value="Genomic_DNA"/>
</dbReference>
<dbReference type="RefSeq" id="XP_001524039.1">
    <property type="nucleotide sequence ID" value="XM_001523989.1"/>
</dbReference>
<dbReference type="SMR" id="A5E5G3"/>
<dbReference type="FunCoup" id="A5E5G3">
    <property type="interactions" value="889"/>
</dbReference>
<dbReference type="STRING" id="379508.A5E5G3"/>
<dbReference type="GeneID" id="5231095"/>
<dbReference type="KEGG" id="lel:PVL30_005578"/>
<dbReference type="eggNOG" id="KOG0077">
    <property type="taxonomic scope" value="Eukaryota"/>
</dbReference>
<dbReference type="HOGENOM" id="CLU_040729_6_0_1"/>
<dbReference type="InParanoid" id="A5E5G3"/>
<dbReference type="OrthoDB" id="2011769at2759"/>
<dbReference type="Proteomes" id="UP000001996">
    <property type="component" value="Unassembled WGS sequence"/>
</dbReference>
<dbReference type="GO" id="GO:0005789">
    <property type="term" value="C:endoplasmic reticulum membrane"/>
    <property type="evidence" value="ECO:0007669"/>
    <property type="project" value="UniProtKB-SubCell"/>
</dbReference>
<dbReference type="GO" id="GO:0012507">
    <property type="term" value="C:ER to Golgi transport vesicle membrane"/>
    <property type="evidence" value="ECO:0007669"/>
    <property type="project" value="UniProtKB-SubCell"/>
</dbReference>
<dbReference type="GO" id="GO:0000139">
    <property type="term" value="C:Golgi membrane"/>
    <property type="evidence" value="ECO:0007669"/>
    <property type="project" value="UniProtKB-SubCell"/>
</dbReference>
<dbReference type="GO" id="GO:0005525">
    <property type="term" value="F:GTP binding"/>
    <property type="evidence" value="ECO:0007669"/>
    <property type="project" value="UniProtKB-KW"/>
</dbReference>
<dbReference type="GO" id="GO:0003924">
    <property type="term" value="F:GTPase activity"/>
    <property type="evidence" value="ECO:0007669"/>
    <property type="project" value="InterPro"/>
</dbReference>
<dbReference type="GO" id="GO:0006886">
    <property type="term" value="P:intracellular protein transport"/>
    <property type="evidence" value="ECO:0007669"/>
    <property type="project" value="InterPro"/>
</dbReference>
<dbReference type="GO" id="GO:0016192">
    <property type="term" value="P:vesicle-mediated transport"/>
    <property type="evidence" value="ECO:0007669"/>
    <property type="project" value="UniProtKB-KW"/>
</dbReference>
<dbReference type="CDD" id="cd00879">
    <property type="entry name" value="Sar1"/>
    <property type="match status" value="1"/>
</dbReference>
<dbReference type="FunFam" id="3.40.50.300:FF:000161">
    <property type="entry name" value="Small COPII coat GTPase"/>
    <property type="match status" value="1"/>
</dbReference>
<dbReference type="Gene3D" id="3.40.50.300">
    <property type="entry name" value="P-loop containing nucleotide triphosphate hydrolases"/>
    <property type="match status" value="1"/>
</dbReference>
<dbReference type="InterPro" id="IPR027417">
    <property type="entry name" value="P-loop_NTPase"/>
</dbReference>
<dbReference type="InterPro" id="IPR005225">
    <property type="entry name" value="Small_GTP-bd"/>
</dbReference>
<dbReference type="InterPro" id="IPR006689">
    <property type="entry name" value="Small_GTPase_ARF/SAR"/>
</dbReference>
<dbReference type="InterPro" id="IPR006687">
    <property type="entry name" value="Small_GTPase_SAR1"/>
</dbReference>
<dbReference type="NCBIfam" id="TIGR00231">
    <property type="entry name" value="small_GTP"/>
    <property type="match status" value="1"/>
</dbReference>
<dbReference type="PANTHER" id="PTHR45684">
    <property type="entry name" value="RE74312P"/>
    <property type="match status" value="1"/>
</dbReference>
<dbReference type="Pfam" id="PF00025">
    <property type="entry name" value="Arf"/>
    <property type="match status" value="1"/>
</dbReference>
<dbReference type="PRINTS" id="PR00328">
    <property type="entry name" value="SAR1GTPBP"/>
</dbReference>
<dbReference type="SMART" id="SM00177">
    <property type="entry name" value="ARF"/>
    <property type="match status" value="1"/>
</dbReference>
<dbReference type="SMART" id="SM00178">
    <property type="entry name" value="SAR"/>
    <property type="match status" value="1"/>
</dbReference>
<dbReference type="SUPFAM" id="SSF52540">
    <property type="entry name" value="P-loop containing nucleoside triphosphate hydrolases"/>
    <property type="match status" value="1"/>
</dbReference>
<dbReference type="PROSITE" id="PS51422">
    <property type="entry name" value="SAR1"/>
    <property type="match status" value="1"/>
</dbReference>
<protein>
    <recommendedName>
        <fullName>Small COPII coat GTPase SAR1</fullName>
        <ecNumber>3.6.5.-</ecNumber>
    </recommendedName>
</protein>
<name>SAR1_LODEL</name>
<keyword id="KW-0968">Cytoplasmic vesicle</keyword>
<keyword id="KW-0256">Endoplasmic reticulum</keyword>
<keyword id="KW-0931">ER-Golgi transport</keyword>
<keyword id="KW-0333">Golgi apparatus</keyword>
<keyword id="KW-0342">GTP-binding</keyword>
<keyword id="KW-0378">Hydrolase</keyword>
<keyword id="KW-0472">Membrane</keyword>
<keyword id="KW-0547">Nucleotide-binding</keyword>
<keyword id="KW-0653">Protein transport</keyword>
<keyword id="KW-1185">Reference proteome</keyword>
<keyword id="KW-0813">Transport</keyword>
<proteinExistence type="inferred from homology"/>
<feature type="chain" id="PRO_0000295517" description="Small COPII coat GTPase SAR1">
    <location>
        <begin position="1"/>
        <end position="190"/>
    </location>
</feature>
<feature type="binding site" evidence="1">
    <location>
        <begin position="33"/>
        <end position="40"/>
    </location>
    <ligand>
        <name>GTP</name>
        <dbReference type="ChEBI" id="CHEBI:37565"/>
    </ligand>
</feature>
<feature type="binding site" evidence="1">
    <location>
        <begin position="76"/>
        <end position="79"/>
    </location>
    <ligand>
        <name>GTP</name>
        <dbReference type="ChEBI" id="CHEBI:37565"/>
    </ligand>
</feature>
<feature type="binding site" evidence="1">
    <location>
        <begin position="135"/>
        <end position="138"/>
    </location>
    <ligand>
        <name>GTP</name>
        <dbReference type="ChEBI" id="CHEBI:37565"/>
    </ligand>
</feature>
<gene>
    <name type="primary">SAR1</name>
    <name type="ORF">LELG_04852</name>
</gene>
<evidence type="ECO:0000250" key="1"/>
<evidence type="ECO:0000305" key="2"/>
<comment type="function">
    <text evidence="1">Small GTPase component of the coat protein complex II (COPII) which promotes the formation of transport vesicles from the endoplasmic reticulum (ER). The coat has two main functions, the physical deformation of the endoplasmic reticulum membrane into vesicles and the selection of cargo molecules. SAR1 controls the coat assembly in a stepwise manner. Activated SAR1-GTP binds to membranes first and recruits the SEC23/24 complex. These SEC23/24-SAR1 prebudding intermediates are then collected by the SEC13/31 complex as subunits polymerize to form coated transport vesicles. Conversion to SAR1-GDP triggers coat release and recycles COPII subunits (By similarity).</text>
</comment>
<comment type="catalytic activity">
    <reaction>
        <text>GTP + H2O = GDP + phosphate + H(+)</text>
        <dbReference type="Rhea" id="RHEA:19669"/>
        <dbReference type="ChEBI" id="CHEBI:15377"/>
        <dbReference type="ChEBI" id="CHEBI:15378"/>
        <dbReference type="ChEBI" id="CHEBI:37565"/>
        <dbReference type="ChEBI" id="CHEBI:43474"/>
        <dbReference type="ChEBI" id="CHEBI:58189"/>
    </reaction>
</comment>
<comment type="subunit">
    <text evidence="1">COPII is composed of at least 5 proteins: the SEC23/24 complex, the SEC13/31 complex and SAR1.</text>
</comment>
<comment type="subcellular location">
    <subcellularLocation>
        <location evidence="1">Cytoplasmic vesicle</location>
        <location evidence="1">COPII-coated vesicle membrane</location>
        <topology evidence="1">Peripheral membrane protein</topology>
        <orientation evidence="1">Cytoplasmic side</orientation>
    </subcellularLocation>
    <subcellularLocation>
        <location evidence="1">Endoplasmic reticulum membrane</location>
        <topology evidence="1">Peripheral membrane protein</topology>
        <orientation evidence="1">Cytoplasmic side</orientation>
    </subcellularLocation>
    <subcellularLocation>
        <location evidence="1">Golgi apparatus membrane</location>
        <topology evidence="1">Peripheral membrane protein</topology>
        <orientation evidence="1">Cytoplasmic side</orientation>
    </subcellularLocation>
</comment>
<comment type="similarity">
    <text evidence="2">Belongs to the small GTPase superfamily. SAR1 family.</text>
</comment>
<comment type="sequence caution" evidence="2">
    <conflict type="erroneous gene model prediction">
        <sequence resource="EMBL-CDS" id="EDK46671"/>
    </conflict>
</comment>